<organism>
    <name type="scientific">Zea mays</name>
    <name type="common">Maize</name>
    <dbReference type="NCBI Taxonomy" id="4577"/>
    <lineage>
        <taxon>Eukaryota</taxon>
        <taxon>Viridiplantae</taxon>
        <taxon>Streptophyta</taxon>
        <taxon>Embryophyta</taxon>
        <taxon>Tracheophyta</taxon>
        <taxon>Spermatophyta</taxon>
        <taxon>Magnoliopsida</taxon>
        <taxon>Liliopsida</taxon>
        <taxon>Poales</taxon>
        <taxon>Poaceae</taxon>
        <taxon>PACMAD clade</taxon>
        <taxon>Panicoideae</taxon>
        <taxon>Andropogonodae</taxon>
        <taxon>Andropogoneae</taxon>
        <taxon>Tripsacinae</taxon>
        <taxon>Zea</taxon>
    </lineage>
</organism>
<keyword id="KW-0158">Chromosome</keyword>
<keyword id="KW-0175">Coiled coil</keyword>
<keyword id="KW-0238">DNA-binding</keyword>
<keyword id="KW-0539">Nucleus</keyword>
<keyword id="KW-1185">Reference proteome</keyword>
<keyword id="KW-0779">Telomere</keyword>
<keyword id="KW-0804">Transcription</keyword>
<keyword id="KW-0805">Transcription regulation</keyword>
<gene>
    <name type="primary">SMH2</name>
</gene>
<sequence>MGVPKQRWTPEEEAALKAGVAKHGPGKWRTILRDSDFSALLRLRSNVDLKDKWRNLSVTAGGYGSREKARMALKKGRRVVPKLTAEPMDVDEKDMDNAHDTVIDVEPLAMAFEPLPFLESPDKSVARLDDLIVEAIRKLNEPSGSNKAVISGYIEDQYWPPADFQYLLSTKLKSLVNSGKLIKVNQKYRIAPSSSLGGISTKVSSSEGMNTENNNVKRLTKPQVVAELEKMKGMTREEAAAFAAKAVAEAEVAMAEAEEAARVAEAAENDAEAAKAFLDAVILSMRNRNAASMILRAC</sequence>
<dbReference type="EMBL" id="EU962228">
    <property type="protein sequence ID" value="ACG34346.1"/>
    <property type="molecule type" value="mRNA"/>
</dbReference>
<dbReference type="EMBL" id="BT040278">
    <property type="protein sequence ID" value="ACF85283.1"/>
    <property type="molecule type" value="mRNA"/>
</dbReference>
<dbReference type="EMBL" id="AY328855">
    <property type="protein sequence ID" value="AAR01212.1"/>
    <property type="molecule type" value="Genomic_DNA"/>
</dbReference>
<dbReference type="RefSeq" id="NP_001141049.1">
    <property type="nucleotide sequence ID" value="NM_001147577.1"/>
</dbReference>
<dbReference type="SMR" id="B4FT40"/>
<dbReference type="FunCoup" id="B4FT40">
    <property type="interactions" value="73"/>
</dbReference>
<dbReference type="STRING" id="4577.B4FT40"/>
<dbReference type="PaxDb" id="4577-GRMZM2G087817_P02"/>
<dbReference type="GeneID" id="100273130"/>
<dbReference type="KEGG" id="zma:100273130"/>
<dbReference type="eggNOG" id="ENOG502QSU2">
    <property type="taxonomic scope" value="Eukaryota"/>
</dbReference>
<dbReference type="HOGENOM" id="CLU_047477_0_1_1"/>
<dbReference type="InParanoid" id="B4FT40"/>
<dbReference type="OMA" id="ALKFRIR"/>
<dbReference type="OrthoDB" id="608866at2759"/>
<dbReference type="Proteomes" id="UP000007305">
    <property type="component" value="Unplaced"/>
</dbReference>
<dbReference type="ExpressionAtlas" id="B4FT40">
    <property type="expression patterns" value="baseline and differential"/>
</dbReference>
<dbReference type="GO" id="GO:0000785">
    <property type="term" value="C:chromatin"/>
    <property type="evidence" value="ECO:0000250"/>
    <property type="project" value="UniProtKB"/>
</dbReference>
<dbReference type="GO" id="GO:0000781">
    <property type="term" value="C:chromosome, telomeric region"/>
    <property type="evidence" value="ECO:0007669"/>
    <property type="project" value="UniProtKB-SubCell"/>
</dbReference>
<dbReference type="GO" id="GO:0005730">
    <property type="term" value="C:nucleolus"/>
    <property type="evidence" value="ECO:0000250"/>
    <property type="project" value="UniProtKB"/>
</dbReference>
<dbReference type="GO" id="GO:0000786">
    <property type="term" value="C:nucleosome"/>
    <property type="evidence" value="ECO:0007669"/>
    <property type="project" value="InterPro"/>
</dbReference>
<dbReference type="GO" id="GO:0005634">
    <property type="term" value="C:nucleus"/>
    <property type="evidence" value="ECO:0000250"/>
    <property type="project" value="UniProtKB"/>
</dbReference>
<dbReference type="GO" id="GO:0003691">
    <property type="term" value="F:double-stranded telomeric DNA binding"/>
    <property type="evidence" value="ECO:0000250"/>
    <property type="project" value="UniProtKB"/>
</dbReference>
<dbReference type="GO" id="GO:0042803">
    <property type="term" value="F:protein homodimerization activity"/>
    <property type="evidence" value="ECO:0000250"/>
    <property type="project" value="UniProtKB"/>
</dbReference>
<dbReference type="GO" id="GO:0043047">
    <property type="term" value="F:single-stranded telomeric DNA binding"/>
    <property type="evidence" value="ECO:0000250"/>
    <property type="project" value="UniProtKB"/>
</dbReference>
<dbReference type="GO" id="GO:0006334">
    <property type="term" value="P:nucleosome assembly"/>
    <property type="evidence" value="ECO:0007669"/>
    <property type="project" value="InterPro"/>
</dbReference>
<dbReference type="CDD" id="cd11660">
    <property type="entry name" value="SANT_TRF"/>
    <property type="match status" value="1"/>
</dbReference>
<dbReference type="FunFam" id="1.10.10.10:FF:000937">
    <property type="entry name" value="Telomere repeat-binding factor 1"/>
    <property type="match status" value="1"/>
</dbReference>
<dbReference type="FunFam" id="1.10.10.60:FF:000168">
    <property type="entry name" value="Telomere repeat-binding factor 1"/>
    <property type="match status" value="1"/>
</dbReference>
<dbReference type="FunFam" id="1.10.246.220:FF:000002">
    <property type="entry name" value="Telomere repeat-binding factor 1"/>
    <property type="match status" value="1"/>
</dbReference>
<dbReference type="Gene3D" id="1.10.246.220">
    <property type="match status" value="1"/>
</dbReference>
<dbReference type="Gene3D" id="1.10.10.10">
    <property type="entry name" value="Winged helix-like DNA-binding domain superfamily/Winged helix DNA-binding domain"/>
    <property type="match status" value="1"/>
</dbReference>
<dbReference type="InterPro" id="IPR005818">
    <property type="entry name" value="Histone_H1/H5_H15"/>
</dbReference>
<dbReference type="InterPro" id="IPR009057">
    <property type="entry name" value="Homeodomain-like_sf"/>
</dbReference>
<dbReference type="InterPro" id="IPR017930">
    <property type="entry name" value="Myb_dom"/>
</dbReference>
<dbReference type="InterPro" id="IPR001005">
    <property type="entry name" value="SANT/Myb"/>
</dbReference>
<dbReference type="InterPro" id="IPR044597">
    <property type="entry name" value="SMH1-6"/>
</dbReference>
<dbReference type="InterPro" id="IPR036388">
    <property type="entry name" value="WH-like_DNA-bd_sf"/>
</dbReference>
<dbReference type="InterPro" id="IPR036390">
    <property type="entry name" value="WH_DNA-bd_sf"/>
</dbReference>
<dbReference type="PANTHER" id="PTHR46267:SF2">
    <property type="entry name" value="SINGLE MYB HISTONE 1"/>
    <property type="match status" value="1"/>
</dbReference>
<dbReference type="PANTHER" id="PTHR46267">
    <property type="entry name" value="SINGLE MYB HISTONE 4"/>
    <property type="match status" value="1"/>
</dbReference>
<dbReference type="Pfam" id="PF00538">
    <property type="entry name" value="Linker_histone"/>
    <property type="match status" value="1"/>
</dbReference>
<dbReference type="Pfam" id="PF00249">
    <property type="entry name" value="Myb_DNA-binding"/>
    <property type="match status" value="1"/>
</dbReference>
<dbReference type="SMART" id="SM00526">
    <property type="entry name" value="H15"/>
    <property type="match status" value="1"/>
</dbReference>
<dbReference type="SMART" id="SM00717">
    <property type="entry name" value="SANT"/>
    <property type="match status" value="1"/>
</dbReference>
<dbReference type="SUPFAM" id="SSF46689">
    <property type="entry name" value="Homeodomain-like"/>
    <property type="match status" value="1"/>
</dbReference>
<dbReference type="SUPFAM" id="SSF46785">
    <property type="entry name" value="Winged helix' DNA-binding domain"/>
    <property type="match status" value="1"/>
</dbReference>
<dbReference type="PROSITE" id="PS51504">
    <property type="entry name" value="H15"/>
    <property type="match status" value="1"/>
</dbReference>
<dbReference type="PROSITE" id="PS51294">
    <property type="entry name" value="HTH_MYB"/>
    <property type="match status" value="1"/>
</dbReference>
<reference key="1">
    <citation type="journal article" date="2009" name="Plant Mol. Biol.">
        <title>Insights into corn genes derived from large-scale cDNA sequencing.</title>
        <authorList>
            <person name="Alexandrov N.N."/>
            <person name="Brover V.V."/>
            <person name="Freidin S."/>
            <person name="Troukhan M.E."/>
            <person name="Tatarinova T.V."/>
            <person name="Zhang H."/>
            <person name="Swaller T.J."/>
            <person name="Lu Y.-P."/>
            <person name="Bouck J."/>
            <person name="Flavell R.B."/>
            <person name="Feldmann K.A."/>
        </authorList>
    </citation>
    <scope>NUCLEOTIDE SEQUENCE [LARGE SCALE MRNA]</scope>
</reference>
<reference key="2">
    <citation type="journal article" date="2009" name="PLoS Genet.">
        <title>Sequencing, mapping, and analysis of 27,455 maize full-length cDNAs.</title>
        <authorList>
            <person name="Soderlund C."/>
            <person name="Descour A."/>
            <person name="Kudrna D."/>
            <person name="Bomhoff M."/>
            <person name="Boyd L."/>
            <person name="Currie J."/>
            <person name="Angelova A."/>
            <person name="Collura K."/>
            <person name="Wissotski M."/>
            <person name="Ashley E."/>
            <person name="Morrow D."/>
            <person name="Fernandes J."/>
            <person name="Walbot V."/>
            <person name="Yu Y."/>
        </authorList>
    </citation>
    <scope>NUCLEOTIDE SEQUENCE [LARGE SCALE MRNA]</scope>
    <source>
        <strain>cv. B73</strain>
    </source>
</reference>
<reference key="3">
    <citation type="journal article" date="2003" name="Plant Physiol.">
        <title>The maize Single myb histone 1 gene, Smh1, belongs to a novel gene family and encodes a protein that binds telomere DNA repeats in vitro.</title>
        <authorList>
            <person name="Marian C.O."/>
            <person name="Bordoli S.J."/>
            <person name="Goltz M."/>
            <person name="Santarella R.A."/>
            <person name="Jackson L.P."/>
            <person name="Danilevskaya O."/>
            <person name="Beckstette M."/>
            <person name="Meeley R."/>
            <person name="Bass H.W."/>
        </authorList>
    </citation>
    <scope>NUCLEOTIDE SEQUENCE [GENOMIC DNA] OF 50-104</scope>
    <scope>GENE FAMILY</scope>
    <scope>NOMENCLATURE</scope>
    <source>
        <strain>cv. B73</strain>
    </source>
</reference>
<comment type="function">
    <text evidence="1">Binds preferentially double-stranded telomeric repeats, but may also bind to the single telomeric strand.</text>
</comment>
<comment type="subunit">
    <text evidence="1">Forms a homodimer and heterodimers.</text>
</comment>
<comment type="subcellular location">
    <subcellularLocation>
        <location evidence="3 4">Nucleus</location>
    </subcellularLocation>
    <subcellularLocation>
        <location evidence="4">Chromosome</location>
    </subcellularLocation>
    <subcellularLocation>
        <location evidence="1">Nucleus</location>
        <location evidence="1">Nucleolus</location>
    </subcellularLocation>
    <subcellularLocation>
        <location evidence="5">Chromosome</location>
        <location evidence="5">Telomere</location>
    </subcellularLocation>
    <text evidence="1">Localized to the nucleolus during interphase.</text>
</comment>
<comment type="domain">
    <text evidence="1">HTH myb-type domain confers double-stranded telomeric DNA-binding while the H15 domain is involved in non-specific DNA-protein interaction and multimerization.</text>
</comment>
<comment type="similarity">
    <text evidence="4">Belongs to the histone H1/H5 family. SMH subfamily.</text>
</comment>
<accession>B4FT40</accession>
<accession>Q6VSV3</accession>
<feature type="chain" id="PRO_0000429014" description="Single myb histone 2">
    <location>
        <begin position="1"/>
        <end position="298"/>
    </location>
</feature>
<feature type="domain" description="HTH myb-type" evidence="3">
    <location>
        <begin position="1"/>
        <end position="61"/>
    </location>
</feature>
<feature type="domain" description="H15" evidence="4">
    <location>
        <begin position="124"/>
        <end position="192"/>
    </location>
</feature>
<feature type="DNA-binding region" description="H-T-H motif" evidence="3">
    <location>
        <begin position="28"/>
        <end position="57"/>
    </location>
</feature>
<feature type="coiled-coil region" evidence="2">
    <location>
        <begin position="237"/>
        <end position="278"/>
    </location>
</feature>
<protein>
    <recommendedName>
        <fullName>Single myb histone 2</fullName>
    </recommendedName>
    <alternativeName>
        <fullName>Protein SINGLE MYB HISTONE2</fullName>
    </alternativeName>
</protein>
<evidence type="ECO:0000250" key="1"/>
<evidence type="ECO:0000255" key="2"/>
<evidence type="ECO:0000255" key="3">
    <source>
        <dbReference type="PROSITE-ProRule" id="PRU00625"/>
    </source>
</evidence>
<evidence type="ECO:0000255" key="4">
    <source>
        <dbReference type="PROSITE-ProRule" id="PRU00837"/>
    </source>
</evidence>
<evidence type="ECO:0000305" key="5"/>
<name>SMH2_MAIZE</name>
<proteinExistence type="evidence at transcript level"/>